<dbReference type="EC" id="4.2.3.4" evidence="1"/>
<dbReference type="EC" id="2.5.1.19" evidence="1"/>
<dbReference type="EC" id="2.7.1.71" evidence="1"/>
<dbReference type="EC" id="4.2.1.10" evidence="1"/>
<dbReference type="EC" id="1.1.1.25" evidence="1"/>
<dbReference type="EMBL" id="EQ999973">
    <property type="protein sequence ID" value="EEQ84223.1"/>
    <property type="molecule type" value="Genomic_DNA"/>
</dbReference>
<dbReference type="RefSeq" id="XP_045272244.1">
    <property type="nucleotide sequence ID" value="XM_045416539.1"/>
</dbReference>
<dbReference type="SMR" id="C5G8R4"/>
<dbReference type="STRING" id="559297.C5G8R4"/>
<dbReference type="GeneID" id="69023692"/>
<dbReference type="VEuPathDB" id="FungiDB:BDCG_01028"/>
<dbReference type="eggNOG" id="KOG0692">
    <property type="taxonomic scope" value="Eukaryota"/>
</dbReference>
<dbReference type="HOGENOM" id="CLU_001201_1_2_1"/>
<dbReference type="OMA" id="SWANMSW"/>
<dbReference type="UniPathway" id="UPA00053">
    <property type="reaction ID" value="UER00085"/>
</dbReference>
<dbReference type="UniPathway" id="UPA00053">
    <property type="reaction ID" value="UER00086"/>
</dbReference>
<dbReference type="UniPathway" id="UPA00053">
    <property type="reaction ID" value="UER00087"/>
</dbReference>
<dbReference type="UniPathway" id="UPA00053">
    <property type="reaction ID" value="UER00088"/>
</dbReference>
<dbReference type="UniPathway" id="UPA00053">
    <property type="reaction ID" value="UER00089"/>
</dbReference>
<dbReference type="GO" id="GO:0005737">
    <property type="term" value="C:cytoplasm"/>
    <property type="evidence" value="ECO:0007669"/>
    <property type="project" value="UniProtKB-SubCell"/>
</dbReference>
<dbReference type="GO" id="GO:0003855">
    <property type="term" value="F:3-dehydroquinate dehydratase activity"/>
    <property type="evidence" value="ECO:0007669"/>
    <property type="project" value="UniProtKB-UniRule"/>
</dbReference>
<dbReference type="GO" id="GO:0003856">
    <property type="term" value="F:3-dehydroquinate synthase activity"/>
    <property type="evidence" value="ECO:0007669"/>
    <property type="project" value="UniProtKB-UniRule"/>
</dbReference>
<dbReference type="GO" id="GO:0003866">
    <property type="term" value="F:3-phosphoshikimate 1-carboxyvinyltransferase activity"/>
    <property type="evidence" value="ECO:0007669"/>
    <property type="project" value="UniProtKB-UniRule"/>
</dbReference>
<dbReference type="GO" id="GO:0005524">
    <property type="term" value="F:ATP binding"/>
    <property type="evidence" value="ECO:0007669"/>
    <property type="project" value="UniProtKB-UniRule"/>
</dbReference>
<dbReference type="GO" id="GO:0046872">
    <property type="term" value="F:metal ion binding"/>
    <property type="evidence" value="ECO:0007669"/>
    <property type="project" value="UniProtKB-UniRule"/>
</dbReference>
<dbReference type="GO" id="GO:0004764">
    <property type="term" value="F:shikimate 3-dehydrogenase (NADP+) activity"/>
    <property type="evidence" value="ECO:0007669"/>
    <property type="project" value="UniProtKB-UniRule"/>
</dbReference>
<dbReference type="GO" id="GO:0004765">
    <property type="term" value="F:shikimate kinase activity"/>
    <property type="evidence" value="ECO:0007669"/>
    <property type="project" value="UniProtKB-UniRule"/>
</dbReference>
<dbReference type="GO" id="GO:0008652">
    <property type="term" value="P:amino acid biosynthetic process"/>
    <property type="evidence" value="ECO:0007669"/>
    <property type="project" value="UniProtKB-KW"/>
</dbReference>
<dbReference type="GO" id="GO:0009073">
    <property type="term" value="P:aromatic amino acid family biosynthetic process"/>
    <property type="evidence" value="ECO:0007669"/>
    <property type="project" value="UniProtKB-UniRule"/>
</dbReference>
<dbReference type="GO" id="GO:0009423">
    <property type="term" value="P:chorismate biosynthetic process"/>
    <property type="evidence" value="ECO:0007669"/>
    <property type="project" value="UniProtKB-UniRule"/>
</dbReference>
<dbReference type="CDD" id="cd00502">
    <property type="entry name" value="DHQase_I"/>
    <property type="match status" value="1"/>
</dbReference>
<dbReference type="CDD" id="cd08195">
    <property type="entry name" value="DHQS"/>
    <property type="match status" value="1"/>
</dbReference>
<dbReference type="CDD" id="cd01556">
    <property type="entry name" value="EPSP_synthase"/>
    <property type="match status" value="1"/>
</dbReference>
<dbReference type="CDD" id="cd01065">
    <property type="entry name" value="NAD_bind_Shikimate_DH"/>
    <property type="match status" value="1"/>
</dbReference>
<dbReference type="CDD" id="cd00464">
    <property type="entry name" value="SK"/>
    <property type="match status" value="1"/>
</dbReference>
<dbReference type="FunFam" id="1.20.1090.10:FF:000007">
    <property type="entry name" value="Pentafunctional AROM polypeptide"/>
    <property type="match status" value="1"/>
</dbReference>
<dbReference type="FunFam" id="3.20.20.70:FF:000135">
    <property type="entry name" value="Pentafunctional AROM polypeptide"/>
    <property type="match status" value="1"/>
</dbReference>
<dbReference type="FunFam" id="3.40.50.1970:FF:000007">
    <property type="entry name" value="Pentafunctional AROM polypeptide"/>
    <property type="match status" value="1"/>
</dbReference>
<dbReference type="FunFam" id="3.40.50.300:FF:001256">
    <property type="entry name" value="Pentafunctional AROM polypeptide"/>
    <property type="match status" value="1"/>
</dbReference>
<dbReference type="FunFam" id="3.65.10.10:FF:000007">
    <property type="entry name" value="Pentafunctional AROM polypeptide"/>
    <property type="match status" value="1"/>
</dbReference>
<dbReference type="FunFam" id="3.65.10.10:FF:000008">
    <property type="entry name" value="Pentafunctional AROM polypeptide"/>
    <property type="match status" value="1"/>
</dbReference>
<dbReference type="Gene3D" id="3.40.50.1970">
    <property type="match status" value="1"/>
</dbReference>
<dbReference type="Gene3D" id="3.20.20.70">
    <property type="entry name" value="Aldolase class I"/>
    <property type="match status" value="1"/>
</dbReference>
<dbReference type="Gene3D" id="1.20.1090.10">
    <property type="entry name" value="Dehydroquinate synthase-like - alpha domain"/>
    <property type="match status" value="1"/>
</dbReference>
<dbReference type="Gene3D" id="3.65.10.10">
    <property type="entry name" value="Enolpyruvate transferase domain"/>
    <property type="match status" value="2"/>
</dbReference>
<dbReference type="Gene3D" id="3.40.50.10860">
    <property type="entry name" value="Leucine Dehydrogenase, chain A, domain 1"/>
    <property type="match status" value="1"/>
</dbReference>
<dbReference type="Gene3D" id="3.40.50.720">
    <property type="entry name" value="NAD(P)-binding Rossmann-like Domain"/>
    <property type="match status" value="1"/>
</dbReference>
<dbReference type="Gene3D" id="3.40.50.300">
    <property type="entry name" value="P-loop containing nucleotide triphosphate hydrolases"/>
    <property type="match status" value="1"/>
</dbReference>
<dbReference type="HAMAP" id="MF_00210">
    <property type="entry name" value="EPSP_synth"/>
    <property type="match status" value="1"/>
</dbReference>
<dbReference type="HAMAP" id="MF_03143">
    <property type="entry name" value="Pentafunct_AroM"/>
    <property type="match status" value="1"/>
</dbReference>
<dbReference type="HAMAP" id="MF_00109">
    <property type="entry name" value="Shikimate_kinase"/>
    <property type="match status" value="1"/>
</dbReference>
<dbReference type="InterPro" id="IPR018508">
    <property type="entry name" value="3-dehydroquinate_DH_AS"/>
</dbReference>
<dbReference type="InterPro" id="IPR013785">
    <property type="entry name" value="Aldolase_TIM"/>
</dbReference>
<dbReference type="InterPro" id="IPR046346">
    <property type="entry name" value="Aminoacid_DH-like_N_sf"/>
</dbReference>
<dbReference type="InterPro" id="IPR016037">
    <property type="entry name" value="DHQ_synth_AroB"/>
</dbReference>
<dbReference type="InterPro" id="IPR030960">
    <property type="entry name" value="DHQS/DOIS_N"/>
</dbReference>
<dbReference type="InterPro" id="IPR056179">
    <property type="entry name" value="DHQS_C"/>
</dbReference>
<dbReference type="InterPro" id="IPR001381">
    <property type="entry name" value="DHquinase_I"/>
</dbReference>
<dbReference type="InterPro" id="IPR001986">
    <property type="entry name" value="Enolpyruvate_Tfrase_dom"/>
</dbReference>
<dbReference type="InterPro" id="IPR036968">
    <property type="entry name" value="Enolpyruvate_Tfrase_sf"/>
</dbReference>
<dbReference type="InterPro" id="IPR006264">
    <property type="entry name" value="EPSP_synthase"/>
</dbReference>
<dbReference type="InterPro" id="IPR023193">
    <property type="entry name" value="EPSP_synthase_CS"/>
</dbReference>
<dbReference type="InterPro" id="IPR036291">
    <property type="entry name" value="NAD(P)-bd_dom_sf"/>
</dbReference>
<dbReference type="InterPro" id="IPR027417">
    <property type="entry name" value="P-loop_NTPase"/>
</dbReference>
<dbReference type="InterPro" id="IPR008289">
    <property type="entry name" value="Pentafunct_AroM"/>
</dbReference>
<dbReference type="InterPro" id="IPR013792">
    <property type="entry name" value="RNA3'P_cycl/enolpyr_Trfase_a/b"/>
</dbReference>
<dbReference type="InterPro" id="IPR031322">
    <property type="entry name" value="Shikimate/glucono_kinase"/>
</dbReference>
<dbReference type="InterPro" id="IPR013708">
    <property type="entry name" value="Shikimate_DH-bd_N"/>
</dbReference>
<dbReference type="InterPro" id="IPR010110">
    <property type="entry name" value="Shikimate_DH_AroM-type"/>
</dbReference>
<dbReference type="InterPro" id="IPR000623">
    <property type="entry name" value="Shikimate_kinase/TSH1"/>
</dbReference>
<dbReference type="InterPro" id="IPR023000">
    <property type="entry name" value="Shikimate_kinase_CS"/>
</dbReference>
<dbReference type="NCBIfam" id="TIGR01356">
    <property type="entry name" value="aroA"/>
    <property type="match status" value="1"/>
</dbReference>
<dbReference type="NCBIfam" id="TIGR01357">
    <property type="entry name" value="aroB"/>
    <property type="match status" value="1"/>
</dbReference>
<dbReference type="NCBIfam" id="TIGR01093">
    <property type="entry name" value="aroD"/>
    <property type="match status" value="1"/>
</dbReference>
<dbReference type="NCBIfam" id="TIGR01809">
    <property type="entry name" value="Shik-DH-AROM"/>
    <property type="match status" value="1"/>
</dbReference>
<dbReference type="PANTHER" id="PTHR21090">
    <property type="entry name" value="AROM/DEHYDROQUINATE SYNTHASE"/>
    <property type="match status" value="1"/>
</dbReference>
<dbReference type="PANTHER" id="PTHR21090:SF5">
    <property type="entry name" value="PENTAFUNCTIONAL AROM POLYPEPTIDE"/>
    <property type="match status" value="1"/>
</dbReference>
<dbReference type="Pfam" id="PF01761">
    <property type="entry name" value="DHQ_synthase"/>
    <property type="match status" value="1"/>
</dbReference>
<dbReference type="Pfam" id="PF24621">
    <property type="entry name" value="DHQS_C"/>
    <property type="match status" value="1"/>
</dbReference>
<dbReference type="Pfam" id="PF01487">
    <property type="entry name" value="DHquinase_I"/>
    <property type="match status" value="1"/>
</dbReference>
<dbReference type="Pfam" id="PF00275">
    <property type="entry name" value="EPSP_synthase"/>
    <property type="match status" value="1"/>
</dbReference>
<dbReference type="Pfam" id="PF08501">
    <property type="entry name" value="Shikimate_dh_N"/>
    <property type="match status" value="1"/>
</dbReference>
<dbReference type="Pfam" id="PF01202">
    <property type="entry name" value="SKI"/>
    <property type="match status" value="1"/>
</dbReference>
<dbReference type="PIRSF" id="PIRSF000514">
    <property type="entry name" value="Pentafunct_AroM"/>
    <property type="match status" value="1"/>
</dbReference>
<dbReference type="PRINTS" id="PR01100">
    <property type="entry name" value="SHIKIMTKNASE"/>
</dbReference>
<dbReference type="SUPFAM" id="SSF51569">
    <property type="entry name" value="Aldolase"/>
    <property type="match status" value="1"/>
</dbReference>
<dbReference type="SUPFAM" id="SSF53223">
    <property type="entry name" value="Aminoacid dehydrogenase-like, N-terminal domain"/>
    <property type="match status" value="1"/>
</dbReference>
<dbReference type="SUPFAM" id="SSF56796">
    <property type="entry name" value="Dehydroquinate synthase-like"/>
    <property type="match status" value="1"/>
</dbReference>
<dbReference type="SUPFAM" id="SSF55205">
    <property type="entry name" value="EPT/RTPC-like"/>
    <property type="match status" value="1"/>
</dbReference>
<dbReference type="SUPFAM" id="SSF51735">
    <property type="entry name" value="NAD(P)-binding Rossmann-fold domains"/>
    <property type="match status" value="1"/>
</dbReference>
<dbReference type="SUPFAM" id="SSF52540">
    <property type="entry name" value="P-loop containing nucleoside triphosphate hydrolases"/>
    <property type="match status" value="1"/>
</dbReference>
<dbReference type="PROSITE" id="PS01028">
    <property type="entry name" value="DEHYDROQUINASE_I"/>
    <property type="match status" value="1"/>
</dbReference>
<dbReference type="PROSITE" id="PS00104">
    <property type="entry name" value="EPSP_SYNTHASE_1"/>
    <property type="match status" value="1"/>
</dbReference>
<dbReference type="PROSITE" id="PS00885">
    <property type="entry name" value="EPSP_SYNTHASE_2"/>
    <property type="match status" value="1"/>
</dbReference>
<dbReference type="PROSITE" id="PS01128">
    <property type="entry name" value="SHIKIMATE_KINASE"/>
    <property type="match status" value="1"/>
</dbReference>
<proteinExistence type="inferred from homology"/>
<protein>
    <recommendedName>
        <fullName evidence="1">Pentafunctional AROM polypeptide</fullName>
    </recommendedName>
    <domain>
        <recommendedName>
            <fullName evidence="1">3-dehydroquinate synthase</fullName>
            <shortName evidence="1">DHQS</shortName>
            <ecNumber evidence="1">4.2.3.4</ecNumber>
        </recommendedName>
    </domain>
    <domain>
        <recommendedName>
            <fullName evidence="1">3-phosphoshikimate 1-carboxyvinyltransferase</fullName>
            <ecNumber evidence="1">2.5.1.19</ecNumber>
        </recommendedName>
        <alternativeName>
            <fullName evidence="1">5-enolpyruvylshikimate-3-phosphate synthase</fullName>
            <shortName evidence="1">EPSP synthase</shortName>
            <shortName evidence="1">EPSPS</shortName>
        </alternativeName>
    </domain>
    <domain>
        <recommendedName>
            <fullName evidence="1">Shikimate kinase</fullName>
            <shortName evidence="1">SK</shortName>
            <ecNumber evidence="1">2.7.1.71</ecNumber>
        </recommendedName>
    </domain>
    <domain>
        <recommendedName>
            <fullName evidence="1">3-dehydroquinate dehydratase</fullName>
            <shortName evidence="1">3-dehydroquinase</shortName>
            <ecNumber evidence="1">4.2.1.10</ecNumber>
        </recommendedName>
    </domain>
    <domain>
        <recommendedName>
            <fullName evidence="1">Shikimate dehydrogenase</fullName>
            <ecNumber evidence="1">1.1.1.25</ecNumber>
        </recommendedName>
    </domain>
</protein>
<sequence>MGVPTKISILGRESIVADFGIWRNYVAKDLLNSCSSSTYILISDTNITPLYLDGFQKSFDDAAANLSPKPRLLTYEIPPGESSKSRETKAGIEDWMLTRQPPCGRDTVIIALGGGVIGDLIGFVAATYMRGVRFVQVPTTLLAMVDSSIGGKTAIDTPNGKNLIGAIWQPQRIYLDMEFLNTLPEREFINGMAEVIKTAAISSEEKFAALEDDAEIILAAVKSKNTPERPRFSGIEETLKRTILSSAEFKAQVVSADEREGGLRNLLNFGHSIGHAIEAILAPQVLHGECVAIGMVKEAELARHLGILNNVSVSRISKCLASYGLPTSLKDERIRKLTADKHCSVEQLITYMGVDKKNDGPKKKVVLLSAIGRTHEPRASTVSNEEIQIVLAPSIEVSPGVPKNLNVTCTPPGSKSISNRALVLAALGSGTCRLKNLLHSDDTEVMLNALERLGAATFSWENEGEVLVVNGKGGKMKASPDELYLGNAGTASRFLTTVATLAQKSSVDSSVLTGNARMKQRPIGDLVDALAANGAGVEYLENSGSLPLKIAASGGFAGGEINLAAKVSSQYVSSLLMCAPYAKKPVTLRLVGGKPISQTYIDMTTTMMRSFGIDVKKSETEEHTYHIPLGFYISPAEYIVESDASSSTYPLAVAAITGTSCTVPNIGSKSLQGDARFAVEVLRPMGCTVDQKDFSTTVTGPANGILRPLPNVDMEPMTDAFLTASVLAAVARGGGSNHTTRIFGIANQRVKECNRIKAMKDELAKFGVTCREHDDGLEIDGIDRSTLRHPSDGVYCYDDHRVAMSFSVLSLVAPQPTLILEKECVGKTWPGWWDSLAQTFKVKLDGKEVEKKTGRGGIVHLDKPAASIFIIGMRGAGKTTSGVWVSKALQRPFIDLDDELERTEGMTIPEIIKQRGWEGFREAELSLLRRVMTEKPTRYIFACGGGIVETPEARKLLIQYHKTKGNVILVMRDIKEIMDFLKIDKTRPAYVEDMMSVWLRRKPWYQECSNVQYFSRLTGLDGMAQVLGGFNRFLKVITGQVDSLAQMRSKENTFFVSLTLPDLAPAAPILKEVTLGSDAVELRVDLLKDPQSDSEIPSVDYVAEQISVLRSRTSVPLVFTIRTKAQGGRFPDDAYDAALQLYRLAIRMGSEFVDLEISFPEQLLRTVTEMKGFSKIIASHHDPKGELSWANGSWIQFYNKALQYGDVIKLVGVARSLDDNASLKKFKTWAEEKHDVPIIAINMGDKGQLSRMLNGFMTPVSHPSLPFKAAPGQLSAREIRKGLSLIGEIKSKKFAVIGNPVSASRSPAMHNALFRQMGLPHIYGTLETEDPEIVKKFIRSPDFGGASITIPLKLDIMPLLDEIAPEAVSIGAVNTIVCAPPAPDDQSQAPRLIGRNTDWQGMVRCLSDAGAYPAATPTTTSAGLVIGGGGTARAAIFALQSMGYSPIYVVGRSPDKLSSMTSTFAPDHDIRILEDVKALESLPTVAIGTIPGDKPIEPHMREILCELFDLCEKANSDAEQARGISTKRILLEMAYKPSVTSLMQLASDSGWTVLPGLEALVAQGVYQCEYWTDITPVYEDARNAVMGVQPKDDDIST</sequence>
<name>ARO1_AJEDR</name>
<reference key="1">
    <citation type="journal article" date="2015" name="PLoS Genet.">
        <title>The dynamic genome and transcriptome of the human fungal pathogen Blastomyces and close relative Emmonsia.</title>
        <authorList>
            <person name="Munoz J.F."/>
            <person name="Gauthier G.M."/>
            <person name="Desjardins C.A."/>
            <person name="Gallo J.E."/>
            <person name="Holder J."/>
            <person name="Sullivan T.D."/>
            <person name="Marty A.J."/>
            <person name="Carmen J.C."/>
            <person name="Chen Z."/>
            <person name="Ding L."/>
            <person name="Gujja S."/>
            <person name="Magrini V."/>
            <person name="Misas E."/>
            <person name="Mitreva M."/>
            <person name="Priest M."/>
            <person name="Saif S."/>
            <person name="Whiston E.A."/>
            <person name="Young S."/>
            <person name="Zeng Q."/>
            <person name="Goldman W.E."/>
            <person name="Mardis E.R."/>
            <person name="Taylor J.W."/>
            <person name="McEwen J.G."/>
            <person name="Clay O.K."/>
            <person name="Klein B.S."/>
            <person name="Cuomo C.A."/>
        </authorList>
    </citation>
    <scope>NUCLEOTIDE SEQUENCE [LARGE SCALE GENOMIC DNA]</scope>
    <source>
        <strain>ER-3 / ATCC MYA-2586</strain>
    </source>
</reference>
<evidence type="ECO:0000255" key="1">
    <source>
        <dbReference type="HAMAP-Rule" id="MF_03143"/>
    </source>
</evidence>
<feature type="chain" id="PRO_0000406700" description="Pentafunctional AROM polypeptide">
    <location>
        <begin position="1"/>
        <end position="1597"/>
    </location>
</feature>
<feature type="region of interest" description="3-dehydroquinate synthase">
    <location>
        <begin position="1"/>
        <end position="384"/>
    </location>
</feature>
<feature type="region of interest" description="EPSP synthase">
    <location>
        <begin position="397"/>
        <end position="842"/>
    </location>
</feature>
<feature type="region of interest" description="Shikimate kinase">
    <location>
        <begin position="866"/>
        <end position="1057"/>
    </location>
</feature>
<feature type="region of interest" description="3-dehydroquinase">
    <location>
        <begin position="1058"/>
        <end position="1278"/>
    </location>
</feature>
<feature type="region of interest" description="Shikimate dehydrogenase">
    <location>
        <begin position="1291"/>
        <end position="1597"/>
    </location>
</feature>
<feature type="active site" description="Proton acceptor; for 3-dehydroquinate synthase activity" evidence="1">
    <location>
        <position position="260"/>
    </location>
</feature>
<feature type="active site" description="Proton acceptor; for 3-dehydroquinate synthase activity" evidence="1">
    <location>
        <position position="275"/>
    </location>
</feature>
<feature type="active site" description="For EPSP synthase activity" evidence="1">
    <location>
        <position position="824"/>
    </location>
</feature>
<feature type="active site" description="Proton acceptor; for 3-dehydroquinate dehydratase activity" evidence="1">
    <location>
        <position position="1181"/>
    </location>
</feature>
<feature type="active site" description="Schiff-base intermediate with substrate; for 3-dehydroquinate dehydratase activity" evidence="1">
    <location>
        <position position="1209"/>
    </location>
</feature>
<feature type="binding site" evidence="1">
    <location>
        <begin position="44"/>
        <end position="46"/>
    </location>
    <ligand>
        <name>NAD(+)</name>
        <dbReference type="ChEBI" id="CHEBI:57540"/>
    </ligand>
</feature>
<feature type="binding site" evidence="1">
    <location>
        <begin position="81"/>
        <end position="84"/>
    </location>
    <ligand>
        <name>NAD(+)</name>
        <dbReference type="ChEBI" id="CHEBI:57540"/>
    </ligand>
</feature>
<feature type="binding site" evidence="1">
    <location>
        <begin position="114"/>
        <end position="116"/>
    </location>
    <ligand>
        <name>NAD(+)</name>
        <dbReference type="ChEBI" id="CHEBI:57540"/>
    </ligand>
</feature>
<feature type="binding site" evidence="1">
    <location>
        <position position="119"/>
    </location>
    <ligand>
        <name>NAD(+)</name>
        <dbReference type="ChEBI" id="CHEBI:57540"/>
    </ligand>
</feature>
<feature type="binding site" evidence="1">
    <location>
        <position position="130"/>
    </location>
    <ligand>
        <name>7-phospho-2-dehydro-3-deoxy-D-arabino-heptonate</name>
        <dbReference type="ChEBI" id="CHEBI:58394"/>
    </ligand>
</feature>
<feature type="binding site" evidence="1">
    <location>
        <begin position="139"/>
        <end position="140"/>
    </location>
    <ligand>
        <name>NAD(+)</name>
        <dbReference type="ChEBI" id="CHEBI:57540"/>
    </ligand>
</feature>
<feature type="binding site" evidence="1">
    <location>
        <position position="146"/>
    </location>
    <ligand>
        <name>7-phospho-2-dehydro-3-deoxy-D-arabino-heptonate</name>
        <dbReference type="ChEBI" id="CHEBI:58394"/>
    </ligand>
</feature>
<feature type="binding site" evidence="1">
    <location>
        <position position="152"/>
    </location>
    <ligand>
        <name>7-phospho-2-dehydro-3-deoxy-D-arabino-heptonate</name>
        <dbReference type="ChEBI" id="CHEBI:58394"/>
    </ligand>
</feature>
<feature type="binding site" evidence="1">
    <location>
        <position position="161"/>
    </location>
    <ligand>
        <name>NAD(+)</name>
        <dbReference type="ChEBI" id="CHEBI:57540"/>
    </ligand>
</feature>
<feature type="binding site" evidence="1">
    <location>
        <position position="162"/>
    </location>
    <ligand>
        <name>7-phospho-2-dehydro-3-deoxy-D-arabino-heptonate</name>
        <dbReference type="ChEBI" id="CHEBI:58394"/>
    </ligand>
</feature>
<feature type="binding site" evidence="1">
    <location>
        <begin position="179"/>
        <end position="182"/>
    </location>
    <ligand>
        <name>NAD(+)</name>
        <dbReference type="ChEBI" id="CHEBI:57540"/>
    </ligand>
</feature>
<feature type="binding site" evidence="1">
    <location>
        <position position="190"/>
    </location>
    <ligand>
        <name>NAD(+)</name>
        <dbReference type="ChEBI" id="CHEBI:57540"/>
    </ligand>
</feature>
<feature type="binding site" evidence="1">
    <location>
        <begin position="194"/>
        <end position="197"/>
    </location>
    <ligand>
        <name>7-phospho-2-dehydro-3-deoxy-D-arabino-heptonate</name>
        <dbReference type="ChEBI" id="CHEBI:58394"/>
    </ligand>
</feature>
<feature type="binding site" evidence="1">
    <location>
        <position position="194"/>
    </location>
    <ligand>
        <name>Zn(2+)</name>
        <dbReference type="ChEBI" id="CHEBI:29105"/>
        <note>catalytic</note>
    </ligand>
</feature>
<feature type="binding site" evidence="1">
    <location>
        <position position="250"/>
    </location>
    <ligand>
        <name>7-phospho-2-dehydro-3-deoxy-D-arabino-heptonate</name>
        <dbReference type="ChEBI" id="CHEBI:58394"/>
    </ligand>
</feature>
<feature type="binding site" evidence="1">
    <location>
        <begin position="264"/>
        <end position="268"/>
    </location>
    <ligand>
        <name>7-phospho-2-dehydro-3-deoxy-D-arabino-heptonate</name>
        <dbReference type="ChEBI" id="CHEBI:58394"/>
    </ligand>
</feature>
<feature type="binding site" evidence="1">
    <location>
        <position position="271"/>
    </location>
    <ligand>
        <name>7-phospho-2-dehydro-3-deoxy-D-arabino-heptonate</name>
        <dbReference type="ChEBI" id="CHEBI:58394"/>
    </ligand>
</feature>
<feature type="binding site" evidence="1">
    <location>
        <position position="271"/>
    </location>
    <ligand>
        <name>Zn(2+)</name>
        <dbReference type="ChEBI" id="CHEBI:29105"/>
        <note>catalytic</note>
    </ligand>
</feature>
<feature type="binding site" evidence="1">
    <location>
        <position position="287"/>
    </location>
    <ligand>
        <name>7-phospho-2-dehydro-3-deoxy-D-arabino-heptonate</name>
        <dbReference type="ChEBI" id="CHEBI:58394"/>
    </ligand>
</feature>
<feature type="binding site" evidence="1">
    <location>
        <position position="287"/>
    </location>
    <ligand>
        <name>Zn(2+)</name>
        <dbReference type="ChEBI" id="CHEBI:29105"/>
        <note>catalytic</note>
    </ligand>
</feature>
<feature type="binding site" evidence="1">
    <location>
        <position position="356"/>
    </location>
    <ligand>
        <name>7-phospho-2-dehydro-3-deoxy-D-arabino-heptonate</name>
        <dbReference type="ChEBI" id="CHEBI:58394"/>
    </ligand>
</feature>
<feature type="binding site" evidence="1">
    <location>
        <begin position="872"/>
        <end position="879"/>
    </location>
    <ligand>
        <name>ATP</name>
        <dbReference type="ChEBI" id="CHEBI:30616"/>
    </ligand>
</feature>
<comment type="function">
    <text evidence="1">The AROM polypeptide catalyzes 5 consecutive enzymatic reactions in prechorismate polyaromatic amino acid biosynthesis.</text>
</comment>
<comment type="catalytic activity">
    <reaction evidence="1">
        <text>7-phospho-2-dehydro-3-deoxy-D-arabino-heptonate = 3-dehydroquinate + phosphate</text>
        <dbReference type="Rhea" id="RHEA:21968"/>
        <dbReference type="ChEBI" id="CHEBI:32364"/>
        <dbReference type="ChEBI" id="CHEBI:43474"/>
        <dbReference type="ChEBI" id="CHEBI:58394"/>
        <dbReference type="EC" id="4.2.3.4"/>
    </reaction>
</comment>
<comment type="catalytic activity">
    <reaction evidence="1">
        <text>3-dehydroquinate = 3-dehydroshikimate + H2O</text>
        <dbReference type="Rhea" id="RHEA:21096"/>
        <dbReference type="ChEBI" id="CHEBI:15377"/>
        <dbReference type="ChEBI" id="CHEBI:16630"/>
        <dbReference type="ChEBI" id="CHEBI:32364"/>
        <dbReference type="EC" id="4.2.1.10"/>
    </reaction>
</comment>
<comment type="catalytic activity">
    <reaction evidence="1">
        <text>shikimate + NADP(+) = 3-dehydroshikimate + NADPH + H(+)</text>
        <dbReference type="Rhea" id="RHEA:17737"/>
        <dbReference type="ChEBI" id="CHEBI:15378"/>
        <dbReference type="ChEBI" id="CHEBI:16630"/>
        <dbReference type="ChEBI" id="CHEBI:36208"/>
        <dbReference type="ChEBI" id="CHEBI:57783"/>
        <dbReference type="ChEBI" id="CHEBI:58349"/>
        <dbReference type="EC" id="1.1.1.25"/>
    </reaction>
</comment>
<comment type="catalytic activity">
    <reaction evidence="1">
        <text>shikimate + ATP = 3-phosphoshikimate + ADP + H(+)</text>
        <dbReference type="Rhea" id="RHEA:13121"/>
        <dbReference type="ChEBI" id="CHEBI:15378"/>
        <dbReference type="ChEBI" id="CHEBI:30616"/>
        <dbReference type="ChEBI" id="CHEBI:36208"/>
        <dbReference type="ChEBI" id="CHEBI:145989"/>
        <dbReference type="ChEBI" id="CHEBI:456216"/>
        <dbReference type="EC" id="2.7.1.71"/>
    </reaction>
</comment>
<comment type="catalytic activity">
    <reaction evidence="1">
        <text>3-phosphoshikimate + phosphoenolpyruvate = 5-O-(1-carboxyvinyl)-3-phosphoshikimate + phosphate</text>
        <dbReference type="Rhea" id="RHEA:21256"/>
        <dbReference type="ChEBI" id="CHEBI:43474"/>
        <dbReference type="ChEBI" id="CHEBI:57701"/>
        <dbReference type="ChEBI" id="CHEBI:58702"/>
        <dbReference type="ChEBI" id="CHEBI:145989"/>
        <dbReference type="EC" id="2.5.1.19"/>
    </reaction>
</comment>
<comment type="cofactor">
    <cofactor>
        <name>Zn(2+)</name>
        <dbReference type="ChEBI" id="CHEBI:29105"/>
    </cofactor>
    <text>Binds 2 Zn(2+) ions per subunit.</text>
</comment>
<comment type="pathway">
    <text evidence="1">Metabolic intermediate biosynthesis; chorismate biosynthesis; chorismate from D-erythrose 4-phosphate and phosphoenolpyruvate: step 2/7.</text>
</comment>
<comment type="pathway">
    <text evidence="1">Metabolic intermediate biosynthesis; chorismate biosynthesis; chorismate from D-erythrose 4-phosphate and phosphoenolpyruvate: step 3/7.</text>
</comment>
<comment type="pathway">
    <text evidence="1">Metabolic intermediate biosynthesis; chorismate biosynthesis; chorismate from D-erythrose 4-phosphate and phosphoenolpyruvate: step 4/7.</text>
</comment>
<comment type="pathway">
    <text evidence="1">Metabolic intermediate biosynthesis; chorismate biosynthesis; chorismate from D-erythrose 4-phosphate and phosphoenolpyruvate: step 5/7.</text>
</comment>
<comment type="pathway">
    <text evidence="1">Metabolic intermediate biosynthesis; chorismate biosynthesis; chorismate from D-erythrose 4-phosphate and phosphoenolpyruvate: step 6/7.</text>
</comment>
<comment type="subunit">
    <text evidence="1">Homodimer.</text>
</comment>
<comment type="subcellular location">
    <subcellularLocation>
        <location evidence="1">Cytoplasm</location>
    </subcellularLocation>
</comment>
<comment type="similarity">
    <text evidence="1">In the N-terminal section; belongs to the sugar phosphate cyclases superfamily. Dehydroquinate synthase family.</text>
</comment>
<comment type="similarity">
    <text evidence="1">In the 2nd section; belongs to the EPSP synthase family.</text>
</comment>
<comment type="similarity">
    <text evidence="1">In the 3rd section; belongs to the shikimate kinase family.</text>
</comment>
<comment type="similarity">
    <text evidence="1">In the 4th section; belongs to the type-I 3-dehydroquinase family.</text>
</comment>
<comment type="similarity">
    <text evidence="1">In the C-terminal section; belongs to the shikimate dehydrogenase family.</text>
</comment>
<keyword id="KW-0028">Amino-acid biosynthesis</keyword>
<keyword id="KW-0057">Aromatic amino acid biosynthesis</keyword>
<keyword id="KW-0067">ATP-binding</keyword>
<keyword id="KW-0963">Cytoplasm</keyword>
<keyword id="KW-0418">Kinase</keyword>
<keyword id="KW-0456">Lyase</keyword>
<keyword id="KW-0479">Metal-binding</keyword>
<keyword id="KW-0511">Multifunctional enzyme</keyword>
<keyword id="KW-0521">NADP</keyword>
<keyword id="KW-0547">Nucleotide-binding</keyword>
<keyword id="KW-0560">Oxidoreductase</keyword>
<keyword id="KW-0808">Transferase</keyword>
<keyword id="KW-0862">Zinc</keyword>
<accession>C5G8R4</accession>
<gene>
    <name type="ORF">BDCG_01028</name>
</gene>
<organism>
    <name type="scientific">Ajellomyces dermatitidis (strain ER-3 / ATCC MYA-2586)</name>
    <name type="common">Blastomyces dermatitidis</name>
    <dbReference type="NCBI Taxonomy" id="559297"/>
    <lineage>
        <taxon>Eukaryota</taxon>
        <taxon>Fungi</taxon>
        <taxon>Dikarya</taxon>
        <taxon>Ascomycota</taxon>
        <taxon>Pezizomycotina</taxon>
        <taxon>Eurotiomycetes</taxon>
        <taxon>Eurotiomycetidae</taxon>
        <taxon>Onygenales</taxon>
        <taxon>Ajellomycetaceae</taxon>
        <taxon>Blastomyces</taxon>
    </lineage>
</organism>